<dbReference type="EMBL" id="CM002238">
    <property type="protein sequence ID" value="ESA43334.1"/>
    <property type="molecule type" value="Genomic_DNA"/>
</dbReference>
<dbReference type="EMBL" id="CM002238">
    <property type="protein sequence ID" value="ESA43335.1"/>
    <property type="molecule type" value="Genomic_DNA"/>
</dbReference>
<dbReference type="RefSeq" id="XP_011393809.1">
    <property type="nucleotide sequence ID" value="XM_011395507.1"/>
</dbReference>
<dbReference type="RefSeq" id="XP_011393810.1">
    <property type="nucleotide sequence ID" value="XM_011395508.1"/>
</dbReference>
<dbReference type="SMR" id="Q7RZQ3"/>
<dbReference type="STRING" id="367110.Q7RZQ3"/>
<dbReference type="PaxDb" id="5141-EFNCRP00000000389"/>
<dbReference type="EnsemblFungi" id="ESA43334">
    <property type="protein sequence ID" value="ESA43334"/>
    <property type="gene ID" value="NCU00311"/>
</dbReference>
<dbReference type="EnsemblFungi" id="ESA43335">
    <property type="protein sequence ID" value="ESA43335"/>
    <property type="gene ID" value="NCU00311"/>
</dbReference>
<dbReference type="GeneID" id="3873920"/>
<dbReference type="KEGG" id="ncr:NCU00311"/>
<dbReference type="VEuPathDB" id="FungiDB:NCU00311"/>
<dbReference type="HOGENOM" id="CLU_017632_0_0_1"/>
<dbReference type="InParanoid" id="Q7RZQ3"/>
<dbReference type="OrthoDB" id="2155283at2759"/>
<dbReference type="Proteomes" id="UP000001805">
    <property type="component" value="Chromosome 3, Linkage Group III"/>
</dbReference>
<dbReference type="GO" id="GO:0005829">
    <property type="term" value="C:cytosol"/>
    <property type="evidence" value="ECO:0007669"/>
    <property type="project" value="UniProtKB-SubCell"/>
</dbReference>
<dbReference type="GO" id="GO:0000932">
    <property type="term" value="C:P-body"/>
    <property type="evidence" value="ECO:0000318"/>
    <property type="project" value="GO_Central"/>
</dbReference>
<dbReference type="GO" id="GO:0003729">
    <property type="term" value="F:mRNA binding"/>
    <property type="evidence" value="ECO:0000318"/>
    <property type="project" value="GO_Central"/>
</dbReference>
<dbReference type="GO" id="GO:0000166">
    <property type="term" value="F:nucleotide binding"/>
    <property type="evidence" value="ECO:0007669"/>
    <property type="project" value="UniProtKB-KW"/>
</dbReference>
<dbReference type="GO" id="GO:0000289">
    <property type="term" value="P:nuclear-transcribed mRNA poly(A) tail shortening"/>
    <property type="evidence" value="ECO:0000318"/>
    <property type="project" value="GO_Central"/>
</dbReference>
<dbReference type="GO" id="GO:0015031">
    <property type="term" value="P:protein transport"/>
    <property type="evidence" value="ECO:0007669"/>
    <property type="project" value="UniProtKB-KW"/>
</dbReference>
<dbReference type="CDD" id="cd09556">
    <property type="entry name" value="SAM_VTS1_fungal"/>
    <property type="match status" value="1"/>
</dbReference>
<dbReference type="FunFam" id="1.10.150.50:FF:000033">
    <property type="entry name" value="Protein vts1, variant"/>
    <property type="match status" value="1"/>
</dbReference>
<dbReference type="Gene3D" id="1.10.150.50">
    <property type="entry name" value="Transcription Factor, Ets-1"/>
    <property type="match status" value="1"/>
</dbReference>
<dbReference type="InterPro" id="IPR001660">
    <property type="entry name" value="SAM"/>
</dbReference>
<dbReference type="InterPro" id="IPR013761">
    <property type="entry name" value="SAM/pointed_sf"/>
</dbReference>
<dbReference type="InterPro" id="IPR050897">
    <property type="entry name" value="SMAUG/VTS1_RNA-bind"/>
</dbReference>
<dbReference type="InterPro" id="IPR037635">
    <property type="entry name" value="VTS1_SAM"/>
</dbReference>
<dbReference type="PANTHER" id="PTHR12515:SF5">
    <property type="entry name" value="PROTEIN SMAUG"/>
    <property type="match status" value="1"/>
</dbReference>
<dbReference type="PANTHER" id="PTHR12515">
    <property type="entry name" value="STERILE ALPHA MOTIF DOMAIN CONTAINING PROTEIN 4-RELATED"/>
    <property type="match status" value="1"/>
</dbReference>
<dbReference type="Pfam" id="PF07647">
    <property type="entry name" value="SAM_2"/>
    <property type="match status" value="1"/>
</dbReference>
<dbReference type="Pfam" id="PF25479">
    <property type="entry name" value="Vts1"/>
    <property type="match status" value="1"/>
</dbReference>
<dbReference type="SMART" id="SM00454">
    <property type="entry name" value="SAM"/>
    <property type="match status" value="1"/>
</dbReference>
<dbReference type="SUPFAM" id="SSF47769">
    <property type="entry name" value="SAM/Pointed domain"/>
    <property type="match status" value="1"/>
</dbReference>
<dbReference type="PROSITE" id="PS50105">
    <property type="entry name" value="SAM_DOMAIN"/>
    <property type="match status" value="1"/>
</dbReference>
<gene>
    <name type="primary">vts1</name>
    <name type="ORF">NCU00311</name>
</gene>
<accession>Q7RZQ3</accession>
<accession>U9W515</accession>
<comment type="function">
    <text evidence="2">RNA-binding protein involved in post-transcriptional regulation through transcript degradation.</text>
</comment>
<comment type="subunit">
    <text evidence="2">Monomer. Binds to RNA.</text>
</comment>
<comment type="subcellular location">
    <subcellularLocation>
        <location evidence="2">Cytoplasm</location>
        <location evidence="2">Cytosol</location>
    </subcellularLocation>
    <subcellularLocation>
        <location evidence="1">Cytoplasm</location>
        <location evidence="1">P-body</location>
    </subcellularLocation>
</comment>
<comment type="similarity">
    <text evidence="5">Belongs to the VTS1 family.</text>
</comment>
<name>VTS1_NEUCR</name>
<keyword id="KW-0963">Cytoplasm</keyword>
<keyword id="KW-0547">Nucleotide-binding</keyword>
<keyword id="KW-0653">Protein transport</keyword>
<keyword id="KW-1185">Reference proteome</keyword>
<keyword id="KW-0694">RNA-binding</keyword>
<keyword id="KW-0813">Transport</keyword>
<sequence length="620" mass="66842">MLNMSNIMSNRNSTPEASNVSSLRPPSSRAIGSNHGLRASADVAALTGAQAAASRIRPSSDFYGQPQSGQVQGNAELDPQDKLAQQWIADIDQYETTLEEMAAATLDQDFKDELSAIEQWFRVLSEAERTAALYALLQQTTQVQIRFFIQVLQQMGKNHPMSGVLSPANFDKDPMSSRLSDAMGKLEVGSARNSLARPSGGANKRHSGLDQTTINTMFPDAVAAIATEKAKFTQQTGNPPPSNRNSLVDNRNSLAAPTVSGPKDDINGQNPASPWGPSDTSRPKSSTGQTPMGQFVQPPPSAGGLRSPRPPQLSSNTNIQSTTLTAAEPQLTELPLLSPYTSSGNWASMVNTPMVPTFGQTQGNNADMVANATAMKLAALSTVNNRFALDDARRYRRARSNDGAPGQSHAQHPLSPGPQGIPSTNVVMINEHGQVLSHDHVLALQQQQQQGLQQGLGGFGGHRSRPTSPGIAMPNYGSALQFTSPQNNGFLSAYDGGAPGLINNGLVPMMGQFNLGGHHAEGYLSDHSEINRGRSPRGRRGSSKPPEDPTDPTLLQDIPSWLRSLRLHKYTDNLKDMKWTDLIELDDKQLEERGVNALGARRKMLKVFEQVKEAKKEGKI</sequence>
<evidence type="ECO:0000250" key="1">
    <source>
        <dbReference type="UniProtKB" id="J9VVN9"/>
    </source>
</evidence>
<evidence type="ECO:0000250" key="2">
    <source>
        <dbReference type="UniProtKB" id="Q08831"/>
    </source>
</evidence>
<evidence type="ECO:0000255" key="3">
    <source>
        <dbReference type="PROSITE-ProRule" id="PRU00184"/>
    </source>
</evidence>
<evidence type="ECO:0000256" key="4">
    <source>
        <dbReference type="SAM" id="MobiDB-lite"/>
    </source>
</evidence>
<evidence type="ECO:0000305" key="5"/>
<proteinExistence type="inferred from homology"/>
<feature type="chain" id="PRO_0000081454" description="RNA-binding protein VTS1">
    <location>
        <begin position="1"/>
        <end position="620"/>
    </location>
</feature>
<feature type="domain" description="SAM" evidence="3">
    <location>
        <begin position="553"/>
        <end position="614"/>
    </location>
</feature>
<feature type="region of interest" description="Disordered" evidence="4">
    <location>
        <begin position="1"/>
        <end position="34"/>
    </location>
</feature>
<feature type="region of interest" description="Disordered" evidence="4">
    <location>
        <begin position="189"/>
        <end position="211"/>
    </location>
</feature>
<feature type="region of interest" description="Disordered" evidence="4">
    <location>
        <begin position="231"/>
        <end position="317"/>
    </location>
</feature>
<feature type="region of interest" description="Disordered" evidence="4">
    <location>
        <begin position="398"/>
        <end position="423"/>
    </location>
</feature>
<feature type="region of interest" description="Disordered" evidence="4">
    <location>
        <begin position="527"/>
        <end position="555"/>
    </location>
</feature>
<feature type="compositionally biased region" description="Polar residues" evidence="4">
    <location>
        <begin position="1"/>
        <end position="25"/>
    </location>
</feature>
<feature type="compositionally biased region" description="Polar residues" evidence="4">
    <location>
        <begin position="232"/>
        <end position="255"/>
    </location>
</feature>
<feature type="compositionally biased region" description="Polar residues" evidence="4">
    <location>
        <begin position="267"/>
        <end position="292"/>
    </location>
</feature>
<protein>
    <recommendedName>
        <fullName>RNA-binding protein VTS1</fullName>
    </recommendedName>
</protein>
<reference key="1">
    <citation type="journal article" date="2003" name="Nature">
        <title>The genome sequence of the filamentous fungus Neurospora crassa.</title>
        <authorList>
            <person name="Galagan J.E."/>
            <person name="Calvo S.E."/>
            <person name="Borkovich K.A."/>
            <person name="Selker E.U."/>
            <person name="Read N.D."/>
            <person name="Jaffe D.B."/>
            <person name="FitzHugh W."/>
            <person name="Ma L.-J."/>
            <person name="Smirnov S."/>
            <person name="Purcell S."/>
            <person name="Rehman B."/>
            <person name="Elkins T."/>
            <person name="Engels R."/>
            <person name="Wang S."/>
            <person name="Nielsen C.B."/>
            <person name="Butler J."/>
            <person name="Endrizzi M."/>
            <person name="Qui D."/>
            <person name="Ianakiev P."/>
            <person name="Bell-Pedersen D."/>
            <person name="Nelson M.A."/>
            <person name="Werner-Washburne M."/>
            <person name="Selitrennikoff C.P."/>
            <person name="Kinsey J.A."/>
            <person name="Braun E.L."/>
            <person name="Zelter A."/>
            <person name="Schulte U."/>
            <person name="Kothe G.O."/>
            <person name="Jedd G."/>
            <person name="Mewes H.-W."/>
            <person name="Staben C."/>
            <person name="Marcotte E."/>
            <person name="Greenberg D."/>
            <person name="Roy A."/>
            <person name="Foley K."/>
            <person name="Naylor J."/>
            <person name="Stange-Thomann N."/>
            <person name="Barrett R."/>
            <person name="Gnerre S."/>
            <person name="Kamal M."/>
            <person name="Kamvysselis M."/>
            <person name="Mauceli E.W."/>
            <person name="Bielke C."/>
            <person name="Rudd S."/>
            <person name="Frishman D."/>
            <person name="Krystofova S."/>
            <person name="Rasmussen C."/>
            <person name="Metzenberg R.L."/>
            <person name="Perkins D.D."/>
            <person name="Kroken S."/>
            <person name="Cogoni C."/>
            <person name="Macino G."/>
            <person name="Catcheside D.E.A."/>
            <person name="Li W."/>
            <person name="Pratt R.J."/>
            <person name="Osmani S.A."/>
            <person name="DeSouza C.P.C."/>
            <person name="Glass N.L."/>
            <person name="Orbach M.J."/>
            <person name="Berglund J.A."/>
            <person name="Voelker R."/>
            <person name="Yarden O."/>
            <person name="Plamann M."/>
            <person name="Seiler S."/>
            <person name="Dunlap J.C."/>
            <person name="Radford A."/>
            <person name="Aramayo R."/>
            <person name="Natvig D.O."/>
            <person name="Alex L.A."/>
            <person name="Mannhaupt G."/>
            <person name="Ebbole D.J."/>
            <person name="Freitag M."/>
            <person name="Paulsen I."/>
            <person name="Sachs M.S."/>
            <person name="Lander E.S."/>
            <person name="Nusbaum C."/>
            <person name="Birren B.W."/>
        </authorList>
    </citation>
    <scope>NUCLEOTIDE SEQUENCE [LARGE SCALE GENOMIC DNA]</scope>
    <source>
        <strain>ATCC 24698 / 74-OR23-1A / CBS 708.71 / DSM 1257 / FGSC 987</strain>
    </source>
</reference>
<organism>
    <name type="scientific">Neurospora crassa (strain ATCC 24698 / 74-OR23-1A / CBS 708.71 / DSM 1257 / FGSC 987)</name>
    <dbReference type="NCBI Taxonomy" id="367110"/>
    <lineage>
        <taxon>Eukaryota</taxon>
        <taxon>Fungi</taxon>
        <taxon>Dikarya</taxon>
        <taxon>Ascomycota</taxon>
        <taxon>Pezizomycotina</taxon>
        <taxon>Sordariomycetes</taxon>
        <taxon>Sordariomycetidae</taxon>
        <taxon>Sordariales</taxon>
        <taxon>Sordariaceae</taxon>
        <taxon>Neurospora</taxon>
    </lineage>
</organism>